<organism>
    <name type="scientific">Histophilus somni (strain 129Pt)</name>
    <name type="common">Haemophilus somnus</name>
    <dbReference type="NCBI Taxonomy" id="205914"/>
    <lineage>
        <taxon>Bacteria</taxon>
        <taxon>Pseudomonadati</taxon>
        <taxon>Pseudomonadota</taxon>
        <taxon>Gammaproteobacteria</taxon>
        <taxon>Pasteurellales</taxon>
        <taxon>Pasteurellaceae</taxon>
        <taxon>Histophilus</taxon>
    </lineage>
</organism>
<accession>Q0I3T0</accession>
<dbReference type="EC" id="3.1.11.6" evidence="1"/>
<dbReference type="EMBL" id="CP000436">
    <property type="protein sequence ID" value="ABI25491.1"/>
    <property type="molecule type" value="Genomic_DNA"/>
</dbReference>
<dbReference type="SMR" id="Q0I3T0"/>
<dbReference type="KEGG" id="hso:HS_1216"/>
<dbReference type="eggNOG" id="COG1570">
    <property type="taxonomic scope" value="Bacteria"/>
</dbReference>
<dbReference type="HOGENOM" id="CLU_023625_3_1_6"/>
<dbReference type="GO" id="GO:0005737">
    <property type="term" value="C:cytoplasm"/>
    <property type="evidence" value="ECO:0007669"/>
    <property type="project" value="UniProtKB-SubCell"/>
</dbReference>
<dbReference type="GO" id="GO:0009318">
    <property type="term" value="C:exodeoxyribonuclease VII complex"/>
    <property type="evidence" value="ECO:0007669"/>
    <property type="project" value="InterPro"/>
</dbReference>
<dbReference type="GO" id="GO:0008855">
    <property type="term" value="F:exodeoxyribonuclease VII activity"/>
    <property type="evidence" value="ECO:0007669"/>
    <property type="project" value="UniProtKB-UniRule"/>
</dbReference>
<dbReference type="GO" id="GO:0003676">
    <property type="term" value="F:nucleic acid binding"/>
    <property type="evidence" value="ECO:0007669"/>
    <property type="project" value="InterPro"/>
</dbReference>
<dbReference type="GO" id="GO:0006308">
    <property type="term" value="P:DNA catabolic process"/>
    <property type="evidence" value="ECO:0007669"/>
    <property type="project" value="UniProtKB-UniRule"/>
</dbReference>
<dbReference type="CDD" id="cd04489">
    <property type="entry name" value="ExoVII_LU_OBF"/>
    <property type="match status" value="1"/>
</dbReference>
<dbReference type="HAMAP" id="MF_00378">
    <property type="entry name" value="Exonuc_7_L"/>
    <property type="match status" value="1"/>
</dbReference>
<dbReference type="InterPro" id="IPR003753">
    <property type="entry name" value="Exonuc_VII_L"/>
</dbReference>
<dbReference type="InterPro" id="IPR020579">
    <property type="entry name" value="Exonuc_VII_lsu_C"/>
</dbReference>
<dbReference type="InterPro" id="IPR025824">
    <property type="entry name" value="OB-fold_nuc-bd_dom"/>
</dbReference>
<dbReference type="NCBIfam" id="TIGR00237">
    <property type="entry name" value="xseA"/>
    <property type="match status" value="1"/>
</dbReference>
<dbReference type="PANTHER" id="PTHR30008">
    <property type="entry name" value="EXODEOXYRIBONUCLEASE 7 LARGE SUBUNIT"/>
    <property type="match status" value="1"/>
</dbReference>
<dbReference type="PANTHER" id="PTHR30008:SF0">
    <property type="entry name" value="EXODEOXYRIBONUCLEASE 7 LARGE SUBUNIT"/>
    <property type="match status" value="1"/>
</dbReference>
<dbReference type="Pfam" id="PF02601">
    <property type="entry name" value="Exonuc_VII_L"/>
    <property type="match status" value="1"/>
</dbReference>
<dbReference type="Pfam" id="PF13742">
    <property type="entry name" value="tRNA_anti_2"/>
    <property type="match status" value="1"/>
</dbReference>
<protein>
    <recommendedName>
        <fullName evidence="1">Exodeoxyribonuclease 7 large subunit</fullName>
        <ecNumber evidence="1">3.1.11.6</ecNumber>
    </recommendedName>
    <alternativeName>
        <fullName evidence="1">Exodeoxyribonuclease VII large subunit</fullName>
        <shortName evidence="1">Exonuclease VII large subunit</shortName>
    </alternativeName>
</protein>
<comment type="function">
    <text evidence="1">Bidirectionally degrades single-stranded DNA into large acid-insoluble oligonucleotides, which are then degraded further into small acid-soluble oligonucleotides.</text>
</comment>
<comment type="catalytic activity">
    <reaction evidence="1">
        <text>Exonucleolytic cleavage in either 5'- to 3'- or 3'- to 5'-direction to yield nucleoside 5'-phosphates.</text>
        <dbReference type="EC" id="3.1.11.6"/>
    </reaction>
</comment>
<comment type="subunit">
    <text evidence="1">Heterooligomer composed of large and small subunits.</text>
</comment>
<comment type="subcellular location">
    <subcellularLocation>
        <location evidence="1">Cytoplasm</location>
    </subcellularLocation>
</comment>
<comment type="similarity">
    <text evidence="1">Belongs to the XseA family.</text>
</comment>
<keyword id="KW-0963">Cytoplasm</keyword>
<keyword id="KW-0269">Exonuclease</keyword>
<keyword id="KW-0378">Hydrolase</keyword>
<keyword id="KW-0540">Nuclease</keyword>
<evidence type="ECO:0000255" key="1">
    <source>
        <dbReference type="HAMAP-Rule" id="MF_00378"/>
    </source>
</evidence>
<name>EX7L_HISS1</name>
<feature type="chain" id="PRO_0000273659" description="Exodeoxyribonuclease 7 large subunit">
    <location>
        <begin position="1"/>
        <end position="448"/>
    </location>
</feature>
<proteinExistence type="inferred from homology"/>
<gene>
    <name evidence="1" type="primary">xseA</name>
    <name type="ordered locus">HS_1216</name>
</gene>
<reference key="1">
    <citation type="journal article" date="2007" name="J. Bacteriol.">
        <title>Complete genome sequence of Haemophilus somnus (Histophilus somni) strain 129Pt and comparison to Haemophilus ducreyi 35000HP and Haemophilus influenzae Rd.</title>
        <authorList>
            <person name="Challacombe J.F."/>
            <person name="Duncan A.J."/>
            <person name="Brettin T.S."/>
            <person name="Bruce D."/>
            <person name="Chertkov O."/>
            <person name="Detter J.C."/>
            <person name="Han C.S."/>
            <person name="Misra M."/>
            <person name="Richardson P."/>
            <person name="Tapia R."/>
            <person name="Thayer N."/>
            <person name="Xie G."/>
            <person name="Inzana T.J."/>
        </authorList>
    </citation>
    <scope>NUCLEOTIDE SEQUENCE [LARGE SCALE GENOMIC DNA]</scope>
    <source>
        <strain>129Pt</strain>
    </source>
</reference>
<sequence>MEQNMGQAKIYSVSQLNQSVRQMLEGQLGVVWLTGEISNFTQPVSGHWYFSLKDENAQVRCAMFRMKNMRVGFKAQNGMQVLVRASVSLYEPRGDYQLIIESMNLAGDGLLQRQFEALKLTLAAEGLFAQHYKKNLPHFAKSVGIITSPTGAALQDILHILQRRDPSLHVVIYPTAVQGKEATAEIVQMIELANKRREVDVLIVGRGGGSLEDLWCFNEERVARAIFHSELPIISAVGHETDVTIADFVADVRAPTPSAAAELVSRHQQELLDQLFYRKQRLEMALDRFFQQKVKLLQRLQFRLQQQHPQSQLNIQQKMMQQLLHRLHLALSTFVDKKQQKMTALCRRLDNSPLPYYVQKQHQILVQLELRLNSGLQKKFKNADYQLSRLCGKLDSLSPLKVLARGYSITKNQQGQALKNSHQIEVGQLISTQLERGIIVSRVEAMEE</sequence>